<accession>Q1I6D7</accession>
<organism>
    <name type="scientific">Pseudomonas entomophila (strain L48)</name>
    <dbReference type="NCBI Taxonomy" id="384676"/>
    <lineage>
        <taxon>Bacteria</taxon>
        <taxon>Pseudomonadati</taxon>
        <taxon>Pseudomonadota</taxon>
        <taxon>Gammaproteobacteria</taxon>
        <taxon>Pseudomonadales</taxon>
        <taxon>Pseudomonadaceae</taxon>
        <taxon>Pseudomonas</taxon>
    </lineage>
</organism>
<evidence type="ECO:0000255" key="1">
    <source>
        <dbReference type="HAMAP-Rule" id="MF_01569"/>
    </source>
</evidence>
<comment type="function">
    <text evidence="1">Catalyzes the attachment of proline to tRNA(Pro) in a two-step reaction: proline is first activated by ATP to form Pro-AMP and then transferred to the acceptor end of tRNA(Pro). As ProRS can inadvertently accommodate and process non-cognate amino acids such as alanine and cysteine, to avoid such errors it has two additional distinct editing activities against alanine. One activity is designated as 'pretransfer' editing and involves the tRNA(Pro)-independent hydrolysis of activated Ala-AMP. The other activity is designated 'posttransfer' editing and involves deacylation of mischarged Ala-tRNA(Pro). The misacylated Cys-tRNA(Pro) is not edited by ProRS.</text>
</comment>
<comment type="catalytic activity">
    <reaction evidence="1">
        <text>tRNA(Pro) + L-proline + ATP = L-prolyl-tRNA(Pro) + AMP + diphosphate</text>
        <dbReference type="Rhea" id="RHEA:14305"/>
        <dbReference type="Rhea" id="RHEA-COMP:9700"/>
        <dbReference type="Rhea" id="RHEA-COMP:9702"/>
        <dbReference type="ChEBI" id="CHEBI:30616"/>
        <dbReference type="ChEBI" id="CHEBI:33019"/>
        <dbReference type="ChEBI" id="CHEBI:60039"/>
        <dbReference type="ChEBI" id="CHEBI:78442"/>
        <dbReference type="ChEBI" id="CHEBI:78532"/>
        <dbReference type="ChEBI" id="CHEBI:456215"/>
        <dbReference type="EC" id="6.1.1.15"/>
    </reaction>
</comment>
<comment type="subunit">
    <text evidence="1">Homodimer.</text>
</comment>
<comment type="subcellular location">
    <subcellularLocation>
        <location evidence="1">Cytoplasm</location>
    </subcellularLocation>
</comment>
<comment type="domain">
    <text evidence="1">Consists of three domains: the N-terminal catalytic domain, the editing domain and the C-terminal anticodon-binding domain.</text>
</comment>
<comment type="similarity">
    <text evidence="1">Belongs to the class-II aminoacyl-tRNA synthetase family. ProS type 1 subfamily.</text>
</comment>
<sequence length="571" mass="63427">MRTSQYLLATQKETPADAVVISHQLMLRAGMIRKLASGLYTWLPMGLRVMRKVEAVVREEMNAAGALEVLMPSIQPAELWQESGRWEQYGPELLRLKDRHDRDFCVGPTHEEVITDLARNELSSYKQLPLNMYQIQTKFRDEIRPRFGLMRGREFIMKDAYSFHADQASLQETYDRMHQAYSNIFTRLGLDFRPVQADTGSIGGSYSHEFHVLASSGEDDVIFSDSSDYAANIEKAEAIPRETVRPAPTEELRLVDTPNAKTIAELVENFGLAIEKTVKTLIVHGAEEGKLVALIVRGDHELNEIKAAKLEQVADPLVMASDTELRAAIGAGAGSLGPLNLPLECIIDRSVALMSDFGIGANIDDKHYFGVNWERDLPVPQVADLRNVVEGDPSPDGQGTLVIKRGIEVGHIFQLGTKYSEALKCQVLGENGKPVVLSMGCYGIGVSRVVAAAIEQSYDDKGIIWNDALAPFQIALVPLRYETDVVREATDKLYAELTAAGFEVLLDDRDKKTSPGIKFADMELIGIPHRIVVSDRGLADGNLEYKHRTESEAQALPLNEVLTFLQARIRR</sequence>
<keyword id="KW-0030">Aminoacyl-tRNA synthetase</keyword>
<keyword id="KW-0067">ATP-binding</keyword>
<keyword id="KW-0963">Cytoplasm</keyword>
<keyword id="KW-0436">Ligase</keyword>
<keyword id="KW-0547">Nucleotide-binding</keyword>
<keyword id="KW-0648">Protein biosynthesis</keyword>
<name>SYP_PSEE4</name>
<feature type="chain" id="PRO_0000288368" description="Proline--tRNA ligase">
    <location>
        <begin position="1"/>
        <end position="571"/>
    </location>
</feature>
<reference key="1">
    <citation type="journal article" date="2006" name="Nat. Biotechnol.">
        <title>Complete genome sequence of the entomopathogenic and metabolically versatile soil bacterium Pseudomonas entomophila.</title>
        <authorList>
            <person name="Vodovar N."/>
            <person name="Vallenet D."/>
            <person name="Cruveiller S."/>
            <person name="Rouy Z."/>
            <person name="Barbe V."/>
            <person name="Acosta C."/>
            <person name="Cattolico L."/>
            <person name="Jubin C."/>
            <person name="Lajus A."/>
            <person name="Segurens B."/>
            <person name="Vacherie B."/>
            <person name="Wincker P."/>
            <person name="Weissenbach J."/>
            <person name="Lemaitre B."/>
            <person name="Medigue C."/>
            <person name="Boccard F."/>
        </authorList>
    </citation>
    <scope>NUCLEOTIDE SEQUENCE [LARGE SCALE GENOMIC DNA]</scope>
    <source>
        <strain>L48</strain>
    </source>
</reference>
<dbReference type="EC" id="6.1.1.15" evidence="1"/>
<dbReference type="EMBL" id="CT573326">
    <property type="protein sequence ID" value="CAK16798.1"/>
    <property type="molecule type" value="Genomic_DNA"/>
</dbReference>
<dbReference type="RefSeq" id="WP_011535169.1">
    <property type="nucleotide sequence ID" value="NC_008027.1"/>
</dbReference>
<dbReference type="SMR" id="Q1I6D7"/>
<dbReference type="STRING" id="384676.PSEEN4105"/>
<dbReference type="GeneID" id="32807119"/>
<dbReference type="KEGG" id="pen:PSEEN4105"/>
<dbReference type="eggNOG" id="COG0442">
    <property type="taxonomic scope" value="Bacteria"/>
</dbReference>
<dbReference type="HOGENOM" id="CLU_016739_0_0_6"/>
<dbReference type="OrthoDB" id="9809052at2"/>
<dbReference type="Proteomes" id="UP000000658">
    <property type="component" value="Chromosome"/>
</dbReference>
<dbReference type="GO" id="GO:0005829">
    <property type="term" value="C:cytosol"/>
    <property type="evidence" value="ECO:0007669"/>
    <property type="project" value="TreeGrafter"/>
</dbReference>
<dbReference type="GO" id="GO:0002161">
    <property type="term" value="F:aminoacyl-tRNA deacylase activity"/>
    <property type="evidence" value="ECO:0007669"/>
    <property type="project" value="InterPro"/>
</dbReference>
<dbReference type="GO" id="GO:0005524">
    <property type="term" value="F:ATP binding"/>
    <property type="evidence" value="ECO:0007669"/>
    <property type="project" value="UniProtKB-UniRule"/>
</dbReference>
<dbReference type="GO" id="GO:0004827">
    <property type="term" value="F:proline-tRNA ligase activity"/>
    <property type="evidence" value="ECO:0007669"/>
    <property type="project" value="UniProtKB-UniRule"/>
</dbReference>
<dbReference type="GO" id="GO:0006433">
    <property type="term" value="P:prolyl-tRNA aminoacylation"/>
    <property type="evidence" value="ECO:0007669"/>
    <property type="project" value="UniProtKB-UniRule"/>
</dbReference>
<dbReference type="CDD" id="cd04334">
    <property type="entry name" value="ProRS-INS"/>
    <property type="match status" value="1"/>
</dbReference>
<dbReference type="CDD" id="cd00861">
    <property type="entry name" value="ProRS_anticodon_short"/>
    <property type="match status" value="1"/>
</dbReference>
<dbReference type="CDD" id="cd00779">
    <property type="entry name" value="ProRS_core_prok"/>
    <property type="match status" value="1"/>
</dbReference>
<dbReference type="FunFam" id="3.30.930.10:FF:000043">
    <property type="entry name" value="Proline--tRNA ligase"/>
    <property type="match status" value="1"/>
</dbReference>
<dbReference type="FunFam" id="3.30.930.10:FF:000097">
    <property type="entry name" value="Proline--tRNA ligase"/>
    <property type="match status" value="1"/>
</dbReference>
<dbReference type="Gene3D" id="3.40.50.800">
    <property type="entry name" value="Anticodon-binding domain"/>
    <property type="match status" value="1"/>
</dbReference>
<dbReference type="Gene3D" id="3.30.930.10">
    <property type="entry name" value="Bira Bifunctional Protein, Domain 2"/>
    <property type="match status" value="2"/>
</dbReference>
<dbReference type="HAMAP" id="MF_01569">
    <property type="entry name" value="Pro_tRNA_synth_type1"/>
    <property type="match status" value="1"/>
</dbReference>
<dbReference type="InterPro" id="IPR002314">
    <property type="entry name" value="aa-tRNA-synt_IIb"/>
</dbReference>
<dbReference type="InterPro" id="IPR006195">
    <property type="entry name" value="aa-tRNA-synth_II"/>
</dbReference>
<dbReference type="InterPro" id="IPR045864">
    <property type="entry name" value="aa-tRNA-synth_II/BPL/LPL"/>
</dbReference>
<dbReference type="InterPro" id="IPR004154">
    <property type="entry name" value="Anticodon-bd"/>
</dbReference>
<dbReference type="InterPro" id="IPR036621">
    <property type="entry name" value="Anticodon-bd_dom_sf"/>
</dbReference>
<dbReference type="InterPro" id="IPR002316">
    <property type="entry name" value="Pro-tRNA-ligase_IIa"/>
</dbReference>
<dbReference type="InterPro" id="IPR004500">
    <property type="entry name" value="Pro-tRNA-synth_IIa_bac-type"/>
</dbReference>
<dbReference type="InterPro" id="IPR023717">
    <property type="entry name" value="Pro-tRNA-Synthase_IIa_type1"/>
</dbReference>
<dbReference type="InterPro" id="IPR050062">
    <property type="entry name" value="Pro-tRNA_synthetase"/>
</dbReference>
<dbReference type="InterPro" id="IPR044140">
    <property type="entry name" value="ProRS_anticodon_short"/>
</dbReference>
<dbReference type="InterPro" id="IPR033730">
    <property type="entry name" value="ProRS_core_prok"/>
</dbReference>
<dbReference type="InterPro" id="IPR036754">
    <property type="entry name" value="YbaK/aa-tRNA-synt-asso_dom_sf"/>
</dbReference>
<dbReference type="InterPro" id="IPR007214">
    <property type="entry name" value="YbaK/aa-tRNA-synth-assoc-dom"/>
</dbReference>
<dbReference type="NCBIfam" id="NF006625">
    <property type="entry name" value="PRK09194.1"/>
    <property type="match status" value="1"/>
</dbReference>
<dbReference type="NCBIfam" id="TIGR00409">
    <property type="entry name" value="proS_fam_II"/>
    <property type="match status" value="1"/>
</dbReference>
<dbReference type="PANTHER" id="PTHR42753">
    <property type="entry name" value="MITOCHONDRIAL RIBOSOME PROTEIN L39/PROLYL-TRNA LIGASE FAMILY MEMBER"/>
    <property type="match status" value="1"/>
</dbReference>
<dbReference type="PANTHER" id="PTHR42753:SF2">
    <property type="entry name" value="PROLINE--TRNA LIGASE"/>
    <property type="match status" value="1"/>
</dbReference>
<dbReference type="Pfam" id="PF03129">
    <property type="entry name" value="HGTP_anticodon"/>
    <property type="match status" value="1"/>
</dbReference>
<dbReference type="Pfam" id="PF00587">
    <property type="entry name" value="tRNA-synt_2b"/>
    <property type="match status" value="1"/>
</dbReference>
<dbReference type="Pfam" id="PF04073">
    <property type="entry name" value="tRNA_edit"/>
    <property type="match status" value="1"/>
</dbReference>
<dbReference type="PIRSF" id="PIRSF001535">
    <property type="entry name" value="ProRS_1"/>
    <property type="match status" value="1"/>
</dbReference>
<dbReference type="PRINTS" id="PR01046">
    <property type="entry name" value="TRNASYNTHPRO"/>
</dbReference>
<dbReference type="SUPFAM" id="SSF52954">
    <property type="entry name" value="Class II aaRS ABD-related"/>
    <property type="match status" value="1"/>
</dbReference>
<dbReference type="SUPFAM" id="SSF55681">
    <property type="entry name" value="Class II aaRS and biotin synthetases"/>
    <property type="match status" value="1"/>
</dbReference>
<dbReference type="SUPFAM" id="SSF55826">
    <property type="entry name" value="YbaK/ProRS associated domain"/>
    <property type="match status" value="1"/>
</dbReference>
<dbReference type="PROSITE" id="PS50862">
    <property type="entry name" value="AA_TRNA_LIGASE_II"/>
    <property type="match status" value="1"/>
</dbReference>
<proteinExistence type="inferred from homology"/>
<gene>
    <name evidence="1" type="primary">proS</name>
    <name type="ordered locus">PSEEN4105</name>
</gene>
<protein>
    <recommendedName>
        <fullName evidence="1">Proline--tRNA ligase</fullName>
        <ecNumber evidence="1">6.1.1.15</ecNumber>
    </recommendedName>
    <alternativeName>
        <fullName evidence="1">Prolyl-tRNA synthetase</fullName>
        <shortName evidence="1">ProRS</shortName>
    </alternativeName>
</protein>